<reference key="1">
    <citation type="journal article" date="2000" name="Nature">
        <title>Sequence and analysis of chromosome 3 of the plant Arabidopsis thaliana.</title>
        <authorList>
            <person name="Salanoubat M."/>
            <person name="Lemcke K."/>
            <person name="Rieger M."/>
            <person name="Ansorge W."/>
            <person name="Unseld M."/>
            <person name="Fartmann B."/>
            <person name="Valle G."/>
            <person name="Bloecker H."/>
            <person name="Perez-Alonso M."/>
            <person name="Obermaier B."/>
            <person name="Delseny M."/>
            <person name="Boutry M."/>
            <person name="Grivell L.A."/>
            <person name="Mache R."/>
            <person name="Puigdomenech P."/>
            <person name="De Simone V."/>
            <person name="Choisne N."/>
            <person name="Artiguenave F."/>
            <person name="Robert C."/>
            <person name="Brottier P."/>
            <person name="Wincker P."/>
            <person name="Cattolico L."/>
            <person name="Weissenbach J."/>
            <person name="Saurin W."/>
            <person name="Quetier F."/>
            <person name="Schaefer M."/>
            <person name="Mueller-Auer S."/>
            <person name="Gabel C."/>
            <person name="Fuchs M."/>
            <person name="Benes V."/>
            <person name="Wurmbach E."/>
            <person name="Drzonek H."/>
            <person name="Erfle H."/>
            <person name="Jordan N."/>
            <person name="Bangert S."/>
            <person name="Wiedelmann R."/>
            <person name="Kranz H."/>
            <person name="Voss H."/>
            <person name="Holland R."/>
            <person name="Brandt P."/>
            <person name="Nyakatura G."/>
            <person name="Vezzi A."/>
            <person name="D'Angelo M."/>
            <person name="Pallavicini A."/>
            <person name="Toppo S."/>
            <person name="Simionati B."/>
            <person name="Conrad A."/>
            <person name="Hornischer K."/>
            <person name="Kauer G."/>
            <person name="Loehnert T.-H."/>
            <person name="Nordsiek G."/>
            <person name="Reichelt J."/>
            <person name="Scharfe M."/>
            <person name="Schoen O."/>
            <person name="Bargues M."/>
            <person name="Terol J."/>
            <person name="Climent J."/>
            <person name="Navarro P."/>
            <person name="Collado C."/>
            <person name="Perez-Perez A."/>
            <person name="Ottenwaelder B."/>
            <person name="Duchemin D."/>
            <person name="Cooke R."/>
            <person name="Laudie M."/>
            <person name="Berger-Llauro C."/>
            <person name="Purnelle B."/>
            <person name="Masuy D."/>
            <person name="de Haan M."/>
            <person name="Maarse A.C."/>
            <person name="Alcaraz J.-P."/>
            <person name="Cottet A."/>
            <person name="Casacuberta E."/>
            <person name="Monfort A."/>
            <person name="Argiriou A."/>
            <person name="Flores M."/>
            <person name="Liguori R."/>
            <person name="Vitale D."/>
            <person name="Mannhaupt G."/>
            <person name="Haase D."/>
            <person name="Schoof H."/>
            <person name="Rudd S."/>
            <person name="Zaccaria P."/>
            <person name="Mewes H.-W."/>
            <person name="Mayer K.F.X."/>
            <person name="Kaul S."/>
            <person name="Town C.D."/>
            <person name="Koo H.L."/>
            <person name="Tallon L.J."/>
            <person name="Jenkins J."/>
            <person name="Rooney T."/>
            <person name="Rizzo M."/>
            <person name="Walts A."/>
            <person name="Utterback T."/>
            <person name="Fujii C.Y."/>
            <person name="Shea T.P."/>
            <person name="Creasy T.H."/>
            <person name="Haas B."/>
            <person name="Maiti R."/>
            <person name="Wu D."/>
            <person name="Peterson J."/>
            <person name="Van Aken S."/>
            <person name="Pai G."/>
            <person name="Militscher J."/>
            <person name="Sellers P."/>
            <person name="Gill J.E."/>
            <person name="Feldblyum T.V."/>
            <person name="Preuss D."/>
            <person name="Lin X."/>
            <person name="Nierman W.C."/>
            <person name="Salzberg S.L."/>
            <person name="White O."/>
            <person name="Venter J.C."/>
            <person name="Fraser C.M."/>
            <person name="Kaneko T."/>
            <person name="Nakamura Y."/>
            <person name="Sato S."/>
            <person name="Kato T."/>
            <person name="Asamizu E."/>
            <person name="Sasamoto S."/>
            <person name="Kimura T."/>
            <person name="Idesawa K."/>
            <person name="Kawashima K."/>
            <person name="Kishida Y."/>
            <person name="Kiyokawa C."/>
            <person name="Kohara M."/>
            <person name="Matsumoto M."/>
            <person name="Matsuno A."/>
            <person name="Muraki A."/>
            <person name="Nakayama S."/>
            <person name="Nakazaki N."/>
            <person name="Shinpo S."/>
            <person name="Takeuchi C."/>
            <person name="Wada T."/>
            <person name="Watanabe A."/>
            <person name="Yamada M."/>
            <person name="Yasuda M."/>
            <person name="Tabata S."/>
        </authorList>
    </citation>
    <scope>NUCLEOTIDE SEQUENCE [LARGE SCALE GENOMIC DNA]</scope>
    <source>
        <strain>cv. Columbia</strain>
    </source>
</reference>
<reference key="2">
    <citation type="journal article" date="2017" name="Plant J.">
        <title>Araport11: a complete reannotation of the Arabidopsis thaliana reference genome.</title>
        <authorList>
            <person name="Cheng C.Y."/>
            <person name="Krishnakumar V."/>
            <person name="Chan A.P."/>
            <person name="Thibaud-Nissen F."/>
            <person name="Schobel S."/>
            <person name="Town C.D."/>
        </authorList>
    </citation>
    <scope>GENOME REANNOTATION</scope>
    <source>
        <strain>cv. Columbia</strain>
    </source>
</reference>
<reference key="3">
    <citation type="journal article" date="2003" name="Science">
        <title>Empirical analysis of transcriptional activity in the Arabidopsis genome.</title>
        <authorList>
            <person name="Yamada K."/>
            <person name="Lim J."/>
            <person name="Dale J.M."/>
            <person name="Chen H."/>
            <person name="Shinn P."/>
            <person name="Palm C.J."/>
            <person name="Southwick A.M."/>
            <person name="Wu H.C."/>
            <person name="Kim C.J."/>
            <person name="Nguyen M."/>
            <person name="Pham P.K."/>
            <person name="Cheuk R.F."/>
            <person name="Karlin-Newmann G."/>
            <person name="Liu S.X."/>
            <person name="Lam B."/>
            <person name="Sakano H."/>
            <person name="Wu T."/>
            <person name="Yu G."/>
            <person name="Miranda M."/>
            <person name="Quach H.L."/>
            <person name="Tripp M."/>
            <person name="Chang C.H."/>
            <person name="Lee J.M."/>
            <person name="Toriumi M.J."/>
            <person name="Chan M.M."/>
            <person name="Tang C.C."/>
            <person name="Onodera C.S."/>
            <person name="Deng J.M."/>
            <person name="Akiyama K."/>
            <person name="Ansari Y."/>
            <person name="Arakawa T."/>
            <person name="Banh J."/>
            <person name="Banno F."/>
            <person name="Bowser L."/>
            <person name="Brooks S.Y."/>
            <person name="Carninci P."/>
            <person name="Chao Q."/>
            <person name="Choy N."/>
            <person name="Enju A."/>
            <person name="Goldsmith A.D."/>
            <person name="Gurjal M."/>
            <person name="Hansen N.F."/>
            <person name="Hayashizaki Y."/>
            <person name="Johnson-Hopson C."/>
            <person name="Hsuan V.W."/>
            <person name="Iida K."/>
            <person name="Karnes M."/>
            <person name="Khan S."/>
            <person name="Koesema E."/>
            <person name="Ishida J."/>
            <person name="Jiang P.X."/>
            <person name="Jones T."/>
            <person name="Kawai J."/>
            <person name="Kamiya A."/>
            <person name="Meyers C."/>
            <person name="Nakajima M."/>
            <person name="Narusaka M."/>
            <person name="Seki M."/>
            <person name="Sakurai T."/>
            <person name="Satou M."/>
            <person name="Tamse R."/>
            <person name="Vaysberg M."/>
            <person name="Wallender E.K."/>
            <person name="Wong C."/>
            <person name="Yamamura Y."/>
            <person name="Yuan S."/>
            <person name="Shinozaki K."/>
            <person name="Davis R.W."/>
            <person name="Theologis A."/>
            <person name="Ecker J.R."/>
        </authorList>
    </citation>
    <scope>NUCLEOTIDE SEQUENCE [LARGE SCALE MRNA]</scope>
    <source>
        <strain>cv. Columbia</strain>
    </source>
</reference>
<reference key="4">
    <citation type="journal article" date="2003" name="Plant Physiol.">
        <title>Analysis of the small GTPase gene superfamily of Arabidopsis.</title>
        <authorList>
            <person name="Vernoud V."/>
            <person name="Horton A.C."/>
            <person name="Yang Z."/>
            <person name="Nielsen E."/>
        </authorList>
    </citation>
    <scope>GENE FAMILY</scope>
    <scope>NOMENCLATURE</scope>
</reference>
<reference key="5">
    <citation type="journal article" date="2004" name="Mol. Cell. Proteomics">
        <title>Identification of new intrinsic proteins in Arabidopsis plasma membrane proteome.</title>
        <authorList>
            <person name="Marmagne A."/>
            <person name="Rouet M.-A."/>
            <person name="Ferro M."/>
            <person name="Rolland N."/>
            <person name="Alcon C."/>
            <person name="Joyard J."/>
            <person name="Garin J."/>
            <person name="Barbier-Brygoo H."/>
            <person name="Ephritikhine G."/>
        </authorList>
    </citation>
    <scope>IDENTIFICATION BY MASS SPECTROMETRY</scope>
    <scope>SUBCELLULAR LOCATION [LARGE SCALE ANALYSIS]</scope>
</reference>
<protein>
    <recommendedName>
        <fullName>Ras-related protein RABA5b</fullName>
        <shortName>AtRABA5b</shortName>
    </recommendedName>
</protein>
<sequence length="217" mass="24320">MGKEDDRGEEYLFKIVLIGDSAVGKSNLLSRFSRDEFDTNSKATIGVEFQTQLVEIEGKEVKAQIWDTAGQERFRAVTSAYYRGAFGALIVYDITRGDTFESVKRWLQELNTHCDTAVAQMLVGNKCDLEDIRAVSVEEGKALAEEEGLFFMETSALDATNVDKAFEIVIREIFNNVSRKLLNSDAYKAELSVNRVSLVNNQDGSESSWRNPSCCSR</sequence>
<evidence type="ECO:0000250" key="1"/>
<evidence type="ECO:0000269" key="2">
    <source>
    </source>
</evidence>
<evidence type="ECO:0000305" key="3"/>
<organism>
    <name type="scientific">Arabidopsis thaliana</name>
    <name type="common">Mouse-ear cress</name>
    <dbReference type="NCBI Taxonomy" id="3702"/>
    <lineage>
        <taxon>Eukaryota</taxon>
        <taxon>Viridiplantae</taxon>
        <taxon>Streptophyta</taxon>
        <taxon>Embryophyta</taxon>
        <taxon>Tracheophyta</taxon>
        <taxon>Spermatophyta</taxon>
        <taxon>Magnoliopsida</taxon>
        <taxon>eudicotyledons</taxon>
        <taxon>Gunneridae</taxon>
        <taxon>Pentapetalae</taxon>
        <taxon>rosids</taxon>
        <taxon>malvids</taxon>
        <taxon>Brassicales</taxon>
        <taxon>Brassicaceae</taxon>
        <taxon>Camelineae</taxon>
        <taxon>Arabidopsis</taxon>
    </lineage>
</organism>
<feature type="chain" id="PRO_0000407350" description="Ras-related protein RABA5b">
    <location>
        <begin position="1"/>
        <end position="217"/>
    </location>
</feature>
<feature type="short sequence motif" description="Effector region" evidence="1">
    <location>
        <begin position="41"/>
        <end position="49"/>
    </location>
</feature>
<feature type="binding site" evidence="1">
    <location>
        <begin position="19"/>
        <end position="26"/>
    </location>
    <ligand>
        <name>GTP</name>
        <dbReference type="ChEBI" id="CHEBI:37565"/>
    </ligand>
</feature>
<feature type="binding site" evidence="1">
    <location>
        <begin position="67"/>
        <end position="71"/>
    </location>
    <ligand>
        <name>GTP</name>
        <dbReference type="ChEBI" id="CHEBI:37565"/>
    </ligand>
</feature>
<feature type="binding site" evidence="1">
    <location>
        <begin position="125"/>
        <end position="128"/>
    </location>
    <ligand>
        <name>GTP</name>
        <dbReference type="ChEBI" id="CHEBI:37565"/>
    </ligand>
</feature>
<feature type="binding site" evidence="1">
    <location>
        <begin position="155"/>
        <end position="156"/>
    </location>
    <ligand>
        <name>GTP</name>
        <dbReference type="ChEBI" id="CHEBI:37565"/>
    </ligand>
</feature>
<feature type="lipid moiety-binding region" description="S-geranylgeranyl cysteine" evidence="1">
    <location>
        <position position="214"/>
    </location>
</feature>
<feature type="lipid moiety-binding region" description="S-geranylgeranyl cysteine" evidence="1">
    <location>
        <position position="215"/>
    </location>
</feature>
<comment type="function">
    <text evidence="1">Intracellular vesicle trafficking and protein transport.</text>
</comment>
<comment type="subcellular location">
    <subcellularLocation>
        <location evidence="2">Cell membrane</location>
        <topology evidence="3">Lipid-anchor</topology>
        <orientation evidence="3">Cytoplasmic side</orientation>
    </subcellularLocation>
</comment>
<comment type="similarity">
    <text evidence="3">Belongs to the small GTPase superfamily. Rab family.</text>
</comment>
<name>RAA5B_ARATH</name>
<gene>
    <name type="primary">RABA5B</name>
    <name type="ordered locus">At3g07410</name>
    <name type="ORF">F21O3.12</name>
</gene>
<proteinExistence type="evidence at protein level"/>
<keyword id="KW-1003">Cell membrane</keyword>
<keyword id="KW-0342">GTP-binding</keyword>
<keyword id="KW-0449">Lipoprotein</keyword>
<keyword id="KW-0472">Membrane</keyword>
<keyword id="KW-0547">Nucleotide-binding</keyword>
<keyword id="KW-0636">Prenylation</keyword>
<keyword id="KW-0653">Protein transport</keyword>
<keyword id="KW-1185">Reference proteome</keyword>
<keyword id="KW-0813">Transport</keyword>
<dbReference type="EMBL" id="AC009853">
    <property type="protein sequence ID" value="AAF02165.1"/>
    <property type="molecule type" value="Genomic_DNA"/>
</dbReference>
<dbReference type="EMBL" id="CP002686">
    <property type="protein sequence ID" value="AEE74539.1"/>
    <property type="molecule type" value="Genomic_DNA"/>
</dbReference>
<dbReference type="EMBL" id="AY072444">
    <property type="protein sequence ID" value="AAL62436.1"/>
    <property type="molecule type" value="mRNA"/>
</dbReference>
<dbReference type="EMBL" id="BT002173">
    <property type="protein sequence ID" value="AAN72184.1"/>
    <property type="molecule type" value="mRNA"/>
</dbReference>
<dbReference type="RefSeq" id="NP_187397.1">
    <property type="nucleotide sequence ID" value="NM_111620.3"/>
</dbReference>
<dbReference type="SMR" id="Q9SRS5"/>
<dbReference type="BioGRID" id="5264">
    <property type="interactions" value="1"/>
</dbReference>
<dbReference type="FunCoup" id="Q9SRS5">
    <property type="interactions" value="121"/>
</dbReference>
<dbReference type="IntAct" id="Q9SRS5">
    <property type="interactions" value="1"/>
</dbReference>
<dbReference type="STRING" id="3702.Q9SRS5"/>
<dbReference type="iPTMnet" id="Q9SRS5"/>
<dbReference type="PaxDb" id="3702-AT3G07410.1"/>
<dbReference type="ProteomicsDB" id="236625"/>
<dbReference type="EnsemblPlants" id="AT3G07410.1">
    <property type="protein sequence ID" value="AT3G07410.1"/>
    <property type="gene ID" value="AT3G07410"/>
</dbReference>
<dbReference type="GeneID" id="819929"/>
<dbReference type="Gramene" id="AT3G07410.1">
    <property type="protein sequence ID" value="AT3G07410.1"/>
    <property type="gene ID" value="AT3G07410"/>
</dbReference>
<dbReference type="KEGG" id="ath:AT3G07410"/>
<dbReference type="Araport" id="AT3G07410"/>
<dbReference type="TAIR" id="AT3G07410">
    <property type="gene designation" value="RABA5B"/>
</dbReference>
<dbReference type="eggNOG" id="KOG0087">
    <property type="taxonomic scope" value="Eukaryota"/>
</dbReference>
<dbReference type="HOGENOM" id="CLU_041217_23_0_1"/>
<dbReference type="InParanoid" id="Q9SRS5"/>
<dbReference type="OMA" id="QELNTHC"/>
<dbReference type="PhylomeDB" id="Q9SRS5"/>
<dbReference type="PRO" id="PR:Q9SRS5"/>
<dbReference type="Proteomes" id="UP000006548">
    <property type="component" value="Chromosome 3"/>
</dbReference>
<dbReference type="ExpressionAtlas" id="Q9SRS5">
    <property type="expression patterns" value="baseline and differential"/>
</dbReference>
<dbReference type="GO" id="GO:0005829">
    <property type="term" value="C:cytosol"/>
    <property type="evidence" value="ECO:0007005"/>
    <property type="project" value="TAIR"/>
</dbReference>
<dbReference type="GO" id="GO:0005886">
    <property type="term" value="C:plasma membrane"/>
    <property type="evidence" value="ECO:0007005"/>
    <property type="project" value="TAIR"/>
</dbReference>
<dbReference type="GO" id="GO:0005525">
    <property type="term" value="F:GTP binding"/>
    <property type="evidence" value="ECO:0007669"/>
    <property type="project" value="UniProtKB-KW"/>
</dbReference>
<dbReference type="GO" id="GO:0003924">
    <property type="term" value="F:GTPase activity"/>
    <property type="evidence" value="ECO:0007669"/>
    <property type="project" value="InterPro"/>
</dbReference>
<dbReference type="GO" id="GO:0015031">
    <property type="term" value="P:protein transport"/>
    <property type="evidence" value="ECO:0007669"/>
    <property type="project" value="UniProtKB-KW"/>
</dbReference>
<dbReference type="CDD" id="cd01868">
    <property type="entry name" value="Rab11_like"/>
    <property type="match status" value="1"/>
</dbReference>
<dbReference type="FunFam" id="3.40.50.300:FF:000274">
    <property type="entry name" value="ras-related protein RABA5a"/>
    <property type="match status" value="1"/>
</dbReference>
<dbReference type="Gene3D" id="3.40.50.300">
    <property type="entry name" value="P-loop containing nucleotide triphosphate hydrolases"/>
    <property type="match status" value="1"/>
</dbReference>
<dbReference type="InterPro" id="IPR027417">
    <property type="entry name" value="P-loop_NTPase"/>
</dbReference>
<dbReference type="InterPro" id="IPR050209">
    <property type="entry name" value="Rab_GTPases_membrane_traffic"/>
</dbReference>
<dbReference type="InterPro" id="IPR005225">
    <property type="entry name" value="Small_GTP-bd"/>
</dbReference>
<dbReference type="InterPro" id="IPR001806">
    <property type="entry name" value="Small_GTPase"/>
</dbReference>
<dbReference type="NCBIfam" id="TIGR00231">
    <property type="entry name" value="small_GTP"/>
    <property type="match status" value="1"/>
</dbReference>
<dbReference type="PANTHER" id="PTHR47979">
    <property type="entry name" value="DRAB11-RELATED"/>
    <property type="match status" value="1"/>
</dbReference>
<dbReference type="Pfam" id="PF00071">
    <property type="entry name" value="Ras"/>
    <property type="match status" value="1"/>
</dbReference>
<dbReference type="PRINTS" id="PR00449">
    <property type="entry name" value="RASTRNSFRMNG"/>
</dbReference>
<dbReference type="SMART" id="SM00175">
    <property type="entry name" value="RAB"/>
    <property type="match status" value="1"/>
</dbReference>
<dbReference type="SMART" id="SM00176">
    <property type="entry name" value="RAN"/>
    <property type="match status" value="1"/>
</dbReference>
<dbReference type="SMART" id="SM00173">
    <property type="entry name" value="RAS"/>
    <property type="match status" value="1"/>
</dbReference>
<dbReference type="SMART" id="SM00174">
    <property type="entry name" value="RHO"/>
    <property type="match status" value="1"/>
</dbReference>
<dbReference type="SUPFAM" id="SSF52540">
    <property type="entry name" value="P-loop containing nucleoside triphosphate hydrolases"/>
    <property type="match status" value="1"/>
</dbReference>
<dbReference type="PROSITE" id="PS51419">
    <property type="entry name" value="RAB"/>
    <property type="match status" value="1"/>
</dbReference>
<accession>Q9SRS5</accession>